<proteinExistence type="evidence at transcript level"/>
<feature type="chain" id="PRO_0000307775" description="PRELI domain-containing protein 2">
    <location>
        <begin position="1"/>
        <end position="176"/>
    </location>
</feature>
<feature type="domain" description="PRELI/MSF1" evidence="1">
    <location>
        <begin position="1"/>
        <end position="175"/>
    </location>
</feature>
<accession>Q6NTS7</accession>
<gene>
    <name type="primary">prelid2</name>
</gene>
<sequence length="176" mass="20250">MGIAVEVRKVYPYPFQHVVNSYLNKYPTPLEKHVLAIKTVEEKTDPASGVVYRKRIATCNNVIPSFLQRFSILKVSNVYLEEESWLDMKTKVMTLKSRCLTWAQYATMKEESVYKESIENSNWTEFTQRGTVTITGAGFLNRVLETFAQTFLNQGVKKSISIMETILRERCGCPFS</sequence>
<keyword id="KW-1185">Reference proteome</keyword>
<organism>
    <name type="scientific">Xenopus laevis</name>
    <name type="common">African clawed frog</name>
    <dbReference type="NCBI Taxonomy" id="8355"/>
    <lineage>
        <taxon>Eukaryota</taxon>
        <taxon>Metazoa</taxon>
        <taxon>Chordata</taxon>
        <taxon>Craniata</taxon>
        <taxon>Vertebrata</taxon>
        <taxon>Euteleostomi</taxon>
        <taxon>Amphibia</taxon>
        <taxon>Batrachia</taxon>
        <taxon>Anura</taxon>
        <taxon>Pipoidea</taxon>
        <taxon>Pipidae</taxon>
        <taxon>Xenopodinae</taxon>
        <taxon>Xenopus</taxon>
        <taxon>Xenopus</taxon>
    </lineage>
</organism>
<name>PRLD2_XENLA</name>
<evidence type="ECO:0000255" key="1">
    <source>
        <dbReference type="PROSITE-ProRule" id="PRU00158"/>
    </source>
</evidence>
<dbReference type="EMBL" id="BC068878">
    <property type="protein sequence ID" value="AAH68878.1"/>
    <property type="molecule type" value="mRNA"/>
</dbReference>
<dbReference type="RefSeq" id="NP_001084731.1">
    <property type="nucleotide sequence ID" value="NM_001091262.1"/>
</dbReference>
<dbReference type="SMR" id="Q6NTS7"/>
<dbReference type="DNASU" id="414696"/>
<dbReference type="GeneID" id="414696"/>
<dbReference type="KEGG" id="xla:414696"/>
<dbReference type="AGR" id="Xenbase:XB-GENE-943685"/>
<dbReference type="CTD" id="414696"/>
<dbReference type="Xenbase" id="XB-GENE-943685">
    <property type="gene designation" value="prelid2.L"/>
</dbReference>
<dbReference type="OMA" id="CRNVVPE"/>
<dbReference type="OrthoDB" id="407630at2759"/>
<dbReference type="Proteomes" id="UP000186698">
    <property type="component" value="Chromosome 3L"/>
</dbReference>
<dbReference type="Bgee" id="414696">
    <property type="expression patterns" value="Expressed in gastrula and 19 other cell types or tissues"/>
</dbReference>
<dbReference type="GO" id="GO:0005758">
    <property type="term" value="C:mitochondrial intermembrane space"/>
    <property type="evidence" value="ECO:0000318"/>
    <property type="project" value="GO_Central"/>
</dbReference>
<dbReference type="GO" id="GO:1990050">
    <property type="term" value="F:phosphatidic acid transfer activity"/>
    <property type="evidence" value="ECO:0000318"/>
    <property type="project" value="GO_Central"/>
</dbReference>
<dbReference type="GO" id="GO:0015914">
    <property type="term" value="P:phospholipid transport"/>
    <property type="evidence" value="ECO:0000318"/>
    <property type="project" value="GO_Central"/>
</dbReference>
<dbReference type="InterPro" id="IPR006797">
    <property type="entry name" value="PRELI/MSF1_dom"/>
</dbReference>
<dbReference type="InterPro" id="IPR037365">
    <property type="entry name" value="Slowmo/Ups"/>
</dbReference>
<dbReference type="PANTHER" id="PTHR11158">
    <property type="entry name" value="MSF1/PX19 RELATED"/>
    <property type="match status" value="1"/>
</dbReference>
<dbReference type="Pfam" id="PF04707">
    <property type="entry name" value="PRELI"/>
    <property type="match status" value="1"/>
</dbReference>
<dbReference type="PROSITE" id="PS50904">
    <property type="entry name" value="PRELI_MSF1"/>
    <property type="match status" value="1"/>
</dbReference>
<reference key="1">
    <citation type="submission" date="2004-04" db="EMBL/GenBank/DDBJ databases">
        <authorList>
            <consortium name="NIH - Xenopus Gene Collection (XGC) project"/>
        </authorList>
    </citation>
    <scope>NUCLEOTIDE SEQUENCE [LARGE SCALE MRNA]</scope>
    <source>
        <tissue>Spleen</tissue>
    </source>
</reference>
<protein>
    <recommendedName>
        <fullName>PRELI domain-containing protein 2</fullName>
    </recommendedName>
</protein>